<protein>
    <recommendedName>
        <fullName evidence="6">Hydroxyproline O-galactosyltransferase GALT6</fullName>
        <ecNumber evidence="5">2.4.1.-</ecNumber>
    </recommendedName>
    <alternativeName>
        <fullName evidence="7">Beta-1,3-galactosyltransferase 19</fullName>
    </alternativeName>
</protein>
<organism>
    <name type="scientific">Arabidopsis thaliana</name>
    <name type="common">Mouse-ear cress</name>
    <dbReference type="NCBI Taxonomy" id="3702"/>
    <lineage>
        <taxon>Eukaryota</taxon>
        <taxon>Viridiplantae</taxon>
        <taxon>Streptophyta</taxon>
        <taxon>Embryophyta</taxon>
        <taxon>Tracheophyta</taxon>
        <taxon>Spermatophyta</taxon>
        <taxon>Magnoliopsida</taxon>
        <taxon>eudicotyledons</taxon>
        <taxon>Gunneridae</taxon>
        <taxon>Pentapetalae</taxon>
        <taxon>rosids</taxon>
        <taxon>malvids</taxon>
        <taxon>Brassicales</taxon>
        <taxon>Brassicaceae</taxon>
        <taxon>Camelineae</taxon>
        <taxon>Arabidopsis</taxon>
    </lineage>
</organism>
<keyword id="KW-0025">Alternative splicing</keyword>
<keyword id="KW-0325">Glycoprotein</keyword>
<keyword id="KW-0328">Glycosyltransferase</keyword>
<keyword id="KW-0333">Golgi apparatus</keyword>
<keyword id="KW-0464">Manganese</keyword>
<keyword id="KW-0472">Membrane</keyword>
<keyword id="KW-1185">Reference proteome</keyword>
<keyword id="KW-0735">Signal-anchor</keyword>
<keyword id="KW-0808">Transferase</keyword>
<keyword id="KW-0812">Transmembrane</keyword>
<keyword id="KW-1133">Transmembrane helix</keyword>
<feature type="chain" id="PRO_0000359429" description="Hydroxyproline O-galactosyltransferase GALT6">
    <location>
        <begin position="1"/>
        <end position="681"/>
    </location>
</feature>
<feature type="topological domain" description="Cytoplasmic" evidence="7">
    <location>
        <begin position="1"/>
        <end position="28"/>
    </location>
</feature>
<feature type="transmembrane region" description="Helical; Signal-anchor for type II membrane protein" evidence="1">
    <location>
        <begin position="29"/>
        <end position="49"/>
    </location>
</feature>
<feature type="topological domain" description="Lumenal" evidence="7">
    <location>
        <begin position="50"/>
        <end position="681"/>
    </location>
</feature>
<feature type="domain" description="Galectin" evidence="2">
    <location>
        <begin position="187"/>
        <end position="401"/>
    </location>
</feature>
<feature type="region of interest" description="Disordered" evidence="3">
    <location>
        <begin position="57"/>
        <end position="80"/>
    </location>
</feature>
<feature type="compositionally biased region" description="Basic and acidic residues" evidence="3">
    <location>
        <begin position="62"/>
        <end position="78"/>
    </location>
</feature>
<feature type="glycosylation site" description="N-linked (GlcNAc...) asparagine" evidence="1">
    <location>
        <position position="629"/>
    </location>
</feature>
<sequence length="681" mass="77741">MRKPKLSKLERLEKFDIFVSLSKQRSVQILMAVGLLYMLLITFEIPFVFKTGLSSLSQDPLTRPEKHNSQRELQERRAPTRPLKSLLYQESQSESPAQGLRRRTRILSSLRFDPETFNPSSKDGSVELHKSAKVAWEVGRKIWEELESGKTLKALEKEKKKKIEEHGTNSCSLSVSLTGSDLLKRGNIMELPCGLTLGSHITVVGKPRAAHSEKDPKISMLKEGDEAVKVSQFKLELQGLKAVEGEEPPRILHLNPRLKGDWSGKPVIEQNTCYRMQWGSAQRCEGWRSRDDEETVDGQVKCEKWARDDSITSKEEESSKAASWWLSRLIGRSKKVTVEWPFPFTVDKLFVLTLSAGLEGYHVSVDGKHVTSFPYRTGFTLEDATGLTINGDIDVHSVFAGSLPTSHPSFSPQRHLELSSNWQAPSLPDEQVDMFIGILSAGNHFAERMAVRRSWMQHKLVKSSKVVARFFVALHSRKEVNVELKKEAEFFGDIVIVPYMDSYDLVVLKTVAICEYGAHQLAAKFIMKCDDDTFVQVDAVLSEAKKTPTDRSLYIGNINYYHKPLRQGKWSVTYEEWPEEDYPPYANGPGYILSNDISRFIVKEFEKHKLRMFKMEDVSVGMWVEQFNNGTKPVDYIHSLRFCQFGCIENYLTAHYQSPRQMICLWDKLVLTGKPQCCNMR</sequence>
<name>B3GTJ_ARATH</name>
<gene>
    <name evidence="6" type="primary">GALT6</name>
    <name evidence="8" type="synonym">B3GALT19</name>
    <name type="ordered locus">At5g62620</name>
    <name type="ORF">MRG21.3</name>
</gene>
<reference key="1">
    <citation type="journal article" date="2014" name="Plant J.">
        <title>The plant glycosyltransferase clone collection for functional genomics.</title>
        <authorList>
            <person name="Lao J."/>
            <person name="Oikawa A."/>
            <person name="Bromley J.R."/>
            <person name="McInerney P."/>
            <person name="Suttangkakul A."/>
            <person name="Smith-Moritz A.M."/>
            <person name="Plahar H."/>
            <person name="Chiu T.-Y."/>
            <person name="Gonzalez Fernandez-Nino S.M.G."/>
            <person name="Ebert B."/>
            <person name="Yang F."/>
            <person name="Christiansen K.M."/>
            <person name="Hansen S.F."/>
            <person name="Stonebloom S."/>
            <person name="Adams P.D."/>
            <person name="Ronald P.C."/>
            <person name="Hillson N.J."/>
            <person name="Hadi M.Z."/>
            <person name="Vega-Sanchez M.E."/>
            <person name="Loque D."/>
            <person name="Scheller H.V."/>
            <person name="Heazlewood J.L."/>
        </authorList>
    </citation>
    <scope>NUCLEOTIDE SEQUENCE [MRNA]</scope>
    <source>
        <strain>cv. Columbia</strain>
    </source>
</reference>
<reference key="2">
    <citation type="journal article" date="2000" name="DNA Res.">
        <title>Structural analysis of Arabidopsis thaliana chromosome 5. X. Sequence features of the regions of 3,076,755 bp covered by sixty P1 and TAC clones.</title>
        <authorList>
            <person name="Sato S."/>
            <person name="Nakamura Y."/>
            <person name="Kaneko T."/>
            <person name="Katoh T."/>
            <person name="Asamizu E."/>
            <person name="Kotani H."/>
            <person name="Tabata S."/>
        </authorList>
    </citation>
    <scope>NUCLEOTIDE SEQUENCE [LARGE SCALE GENOMIC DNA]</scope>
    <source>
        <strain>cv. Columbia</strain>
    </source>
</reference>
<reference key="3">
    <citation type="journal article" date="2017" name="Plant J.">
        <title>Araport11: a complete reannotation of the Arabidopsis thaliana reference genome.</title>
        <authorList>
            <person name="Cheng C.Y."/>
            <person name="Krishnakumar V."/>
            <person name="Chan A.P."/>
            <person name="Thibaud-Nissen F."/>
            <person name="Schobel S."/>
            <person name="Town C.D."/>
        </authorList>
    </citation>
    <scope>GENOME REANNOTATION</scope>
    <source>
        <strain>cv. Columbia</strain>
    </source>
</reference>
<reference key="4">
    <citation type="journal article" date="2004" name="Genome Res.">
        <title>Whole genome sequence comparisons and 'full-length' cDNA sequences: a combined approach to evaluate and improve Arabidopsis genome annotation.</title>
        <authorList>
            <person name="Castelli V."/>
            <person name="Aury J.-M."/>
            <person name="Jaillon O."/>
            <person name="Wincker P."/>
            <person name="Clepet C."/>
            <person name="Menard M."/>
            <person name="Cruaud C."/>
            <person name="Quetier F."/>
            <person name="Scarpelli C."/>
            <person name="Schaechter V."/>
            <person name="Temple G."/>
            <person name="Caboche M."/>
            <person name="Weissenbach J."/>
            <person name="Salanoubat M."/>
        </authorList>
    </citation>
    <scope>NUCLEOTIDE SEQUENCE [LARGE SCALE MRNA]</scope>
    <source>
        <strain>cv. Columbia</strain>
    </source>
</reference>
<reference key="5">
    <citation type="journal article" date="2007" name="Plant Cell">
        <title>A unique beta-1,3-galactosyltransferase is indispensable for the biosynthesis of N-glycans containing Lewis a structures in Arabidopsis thaliana.</title>
        <authorList>
            <person name="Strasser R."/>
            <person name="Bondili J.S."/>
            <person name="Vavra U."/>
            <person name="Schoberer J."/>
            <person name="Svoboda B."/>
            <person name="Gloessl J."/>
            <person name="Leonard R."/>
            <person name="Stadlmann J."/>
            <person name="Altmann F."/>
            <person name="Steinkellner H."/>
            <person name="Mach L."/>
        </authorList>
    </citation>
    <scope>TISSUE SPECIFICITY</scope>
</reference>
<reference key="6">
    <citation type="journal article" date="2008" name="Plant Mol. Biol.">
        <title>Identification of a novel group of putative Arabidopsis thaliana beta-(1,3)-galactosyltransferases.</title>
        <authorList>
            <person name="Qu Y."/>
            <person name="Egelund J."/>
            <person name="Gilson P.R."/>
            <person name="Houghton F."/>
            <person name="Gleeson P.A."/>
            <person name="Schultz C.J."/>
            <person name="Bacic A."/>
        </authorList>
    </citation>
    <scope>GENE FAMILY</scope>
    <scope>NOMENCLATURE</scope>
</reference>
<reference key="7">
    <citation type="journal article" date="2015" name="BMC Plant Biol.">
        <title>A small multigene hydroxyproline-O-galactosyltransferase family functions in arabinogalactan-protein glycosylation, growth and development in Arabidopsis.</title>
        <authorList>
            <person name="Basu D."/>
            <person name="Tian L."/>
            <person name="Wang W."/>
            <person name="Bobbs S."/>
            <person name="Herock H."/>
            <person name="Travers A."/>
            <person name="Showalter A.M."/>
        </authorList>
    </citation>
    <scope>FUNCTION</scope>
    <scope>COFACTOR</scope>
    <scope>SUBCELLULAR LOCATION</scope>
    <scope>DISRUPTION PHENOTYPE</scope>
</reference>
<proteinExistence type="evidence at transcript level"/>
<dbReference type="EC" id="2.4.1.-" evidence="5"/>
<dbReference type="EMBL" id="KJ138629">
    <property type="protein sequence ID" value="AHL38569.1"/>
    <property type="molecule type" value="mRNA"/>
</dbReference>
<dbReference type="EMBL" id="AB020751">
    <property type="protein sequence ID" value="BAA97209.1"/>
    <property type="status" value="ALT_SEQ"/>
    <property type="molecule type" value="Genomic_DNA"/>
</dbReference>
<dbReference type="EMBL" id="CP002688">
    <property type="protein sequence ID" value="AED97631.1"/>
    <property type="molecule type" value="Genomic_DNA"/>
</dbReference>
<dbReference type="EMBL" id="BX831498">
    <property type="status" value="NOT_ANNOTATED_CDS"/>
    <property type="molecule type" value="mRNA"/>
</dbReference>
<dbReference type="RefSeq" id="NP_201068.1">
    <molecule id="Q9LV16-1"/>
    <property type="nucleotide sequence ID" value="NM_125657.5"/>
</dbReference>
<dbReference type="SMR" id="Q9LV16"/>
<dbReference type="FunCoup" id="Q9LV16">
    <property type="interactions" value="794"/>
</dbReference>
<dbReference type="STRING" id="3702.Q9LV16"/>
<dbReference type="CAZy" id="GT31">
    <property type="family name" value="Glycosyltransferase Family 31"/>
</dbReference>
<dbReference type="GlyCosmos" id="Q9LV16">
    <property type="glycosylation" value="1 site, No reported glycans"/>
</dbReference>
<dbReference type="GlyGen" id="Q9LV16">
    <property type="glycosylation" value="1 site"/>
</dbReference>
<dbReference type="iPTMnet" id="Q9LV16"/>
<dbReference type="PaxDb" id="3702-AT5G62620.1"/>
<dbReference type="ProteomicsDB" id="240964">
    <molecule id="Q9LV16-1"/>
</dbReference>
<dbReference type="EnsemblPlants" id="AT5G62620.1">
    <molecule id="Q9LV16-1"/>
    <property type="protein sequence ID" value="AT5G62620.1"/>
    <property type="gene ID" value="AT5G62620"/>
</dbReference>
<dbReference type="GeneID" id="836383"/>
<dbReference type="Gramene" id="AT5G62620.1">
    <molecule id="Q9LV16-1"/>
    <property type="protein sequence ID" value="AT5G62620.1"/>
    <property type="gene ID" value="AT5G62620"/>
</dbReference>
<dbReference type="KEGG" id="ath:AT5G62620"/>
<dbReference type="Araport" id="AT5G62620"/>
<dbReference type="TAIR" id="AT5G62620">
    <property type="gene designation" value="GALT6"/>
</dbReference>
<dbReference type="eggNOG" id="KOG2287">
    <property type="taxonomic scope" value="Eukaryota"/>
</dbReference>
<dbReference type="HOGENOM" id="CLU_017063_2_0_1"/>
<dbReference type="InParanoid" id="Q9LV16"/>
<dbReference type="PhylomeDB" id="Q9LV16"/>
<dbReference type="BioCyc" id="ARA:AT5G62620-MONOMER"/>
<dbReference type="UniPathway" id="UPA00378"/>
<dbReference type="PRO" id="PR:Q9LV16"/>
<dbReference type="Proteomes" id="UP000006548">
    <property type="component" value="Chromosome 5"/>
</dbReference>
<dbReference type="ExpressionAtlas" id="Q9LV16">
    <property type="expression patterns" value="baseline and differential"/>
</dbReference>
<dbReference type="GO" id="GO:0005794">
    <property type="term" value="C:Golgi apparatus"/>
    <property type="evidence" value="ECO:0000314"/>
    <property type="project" value="TAIR"/>
</dbReference>
<dbReference type="GO" id="GO:0000139">
    <property type="term" value="C:Golgi membrane"/>
    <property type="evidence" value="ECO:0007669"/>
    <property type="project" value="UniProtKB-SubCell"/>
</dbReference>
<dbReference type="GO" id="GO:0030246">
    <property type="term" value="F:carbohydrate binding"/>
    <property type="evidence" value="ECO:0007669"/>
    <property type="project" value="InterPro"/>
</dbReference>
<dbReference type="GO" id="GO:1990714">
    <property type="term" value="F:hydroxyproline O-galactosyltransferase activity"/>
    <property type="evidence" value="ECO:0000314"/>
    <property type="project" value="TAIR"/>
</dbReference>
<dbReference type="GO" id="GO:0010405">
    <property type="term" value="P:arabinogalactan protein metabolic process"/>
    <property type="evidence" value="ECO:0000315"/>
    <property type="project" value="UniProtKB"/>
</dbReference>
<dbReference type="GO" id="GO:0048354">
    <property type="term" value="P:mucilage biosynthetic process involved in seed coat development"/>
    <property type="evidence" value="ECO:0000315"/>
    <property type="project" value="TAIR"/>
</dbReference>
<dbReference type="GO" id="GO:1900056">
    <property type="term" value="P:negative regulation of leaf senescence"/>
    <property type="evidence" value="ECO:0000315"/>
    <property type="project" value="TAIR"/>
</dbReference>
<dbReference type="GO" id="GO:0018258">
    <property type="term" value="P:protein O-linked glycosylation via hydroxyproline"/>
    <property type="evidence" value="ECO:0000314"/>
    <property type="project" value="UniProtKB"/>
</dbReference>
<dbReference type="CDD" id="cd00070">
    <property type="entry name" value="GLECT"/>
    <property type="match status" value="1"/>
</dbReference>
<dbReference type="FunFam" id="3.90.550.50:FF:000005">
    <property type="entry name" value="Hydroxyproline O-galactosyltransferase"/>
    <property type="match status" value="1"/>
</dbReference>
<dbReference type="FunFam" id="2.60.120.200:FF:000071">
    <property type="entry name" value="Hydroxyproline O-galactosyltransferase GALT2"/>
    <property type="match status" value="1"/>
</dbReference>
<dbReference type="FunFam" id="2.60.120.200:FF:000199">
    <property type="entry name" value="Hydroxyproline O-galactosyltransferase GALT4"/>
    <property type="match status" value="1"/>
</dbReference>
<dbReference type="Gene3D" id="2.60.120.200">
    <property type="match status" value="2"/>
</dbReference>
<dbReference type="Gene3D" id="3.90.550.50">
    <property type="match status" value="1"/>
</dbReference>
<dbReference type="InterPro" id="IPR013320">
    <property type="entry name" value="ConA-like_dom_sf"/>
</dbReference>
<dbReference type="InterPro" id="IPR001079">
    <property type="entry name" value="Galectin_CRD"/>
</dbReference>
<dbReference type="InterPro" id="IPR002659">
    <property type="entry name" value="Glyco_trans_31"/>
</dbReference>
<dbReference type="PANTHER" id="PTHR11214">
    <property type="entry name" value="BETA-1,3-N-ACETYLGLUCOSAMINYLTRANSFERASE"/>
    <property type="match status" value="1"/>
</dbReference>
<dbReference type="PANTHER" id="PTHR11214:SF352">
    <property type="entry name" value="HYDROXYPROLINE O-GALACTOSYLTRANSFERASE GALT6"/>
    <property type="match status" value="1"/>
</dbReference>
<dbReference type="Pfam" id="PF00337">
    <property type="entry name" value="Gal-bind_lectin"/>
    <property type="match status" value="1"/>
</dbReference>
<dbReference type="Pfam" id="PF01762">
    <property type="entry name" value="Galactosyl_T"/>
    <property type="match status" value="1"/>
</dbReference>
<dbReference type="SMART" id="SM00908">
    <property type="entry name" value="Gal-bind_lectin"/>
    <property type="match status" value="1"/>
</dbReference>
<dbReference type="SUPFAM" id="SSF49899">
    <property type="entry name" value="Concanavalin A-like lectins/glucanases"/>
    <property type="match status" value="1"/>
</dbReference>
<dbReference type="PROSITE" id="PS51304">
    <property type="entry name" value="GALECTIN"/>
    <property type="match status" value="1"/>
</dbReference>
<comment type="function">
    <text evidence="5">Possesses hydroxyproline O-galactosyltransferase activity. Transfers galactose from UDP-galactose to hydroxyproline residues in the arabinogalactan proteins (AGPs). Is specific for AGPs containing non-contiguous peptidyl hydroxyproline residues. Utilizes UDP-galactose solely as sugar donor. The addition of galactose onto the peptidyl hydroxyproline residues in AGP core proteins represents the first committed step in arabinogalactan polysaccharide addition. AGP glycans play essential roles in both vegetative and reproductive plant growth.</text>
</comment>
<comment type="cofactor">
    <cofactor evidence="5">
        <name>Mn(2+)</name>
        <dbReference type="ChEBI" id="CHEBI:29035"/>
    </cofactor>
</comment>
<comment type="pathway">
    <text evidence="7">Protein modification; protein glycosylation.</text>
</comment>
<comment type="subcellular location">
    <subcellularLocation>
        <location evidence="5">Golgi apparatus membrane</location>
        <topology evidence="7">Single-pass type II membrane protein</topology>
    </subcellularLocation>
</comment>
<comment type="alternative products">
    <event type="alternative splicing"/>
    <isoform>
        <id>Q9LV16-1</id>
        <name>1</name>
        <sequence type="displayed"/>
    </isoform>
    <text>A number of isoforms are produced. According to EST sequences.</text>
</comment>
<comment type="tissue specificity">
    <text evidence="4">Expressed in junveile leaves and stems, and at lower levels in cauline leaves and siliques.</text>
</comment>
<comment type="disruption phenotype">
    <text evidence="5">Reduced levels of arabinogalactan proteins. Root hair defects. Reduced seed sets. Reduced seed coat mucilage. Increased sensitivity to salt stress. Premature senescence.</text>
</comment>
<comment type="similarity">
    <text evidence="7">Belongs to the glycosyltransferase 31 family.</text>
</comment>
<comment type="sequence caution" evidence="7">
    <conflict type="erroneous gene model prediction">
        <sequence resource="EMBL-CDS" id="BAA97209"/>
    </conflict>
</comment>
<comment type="sequence caution" evidence="7">
    <conflict type="miscellaneous discrepancy">
        <sequence resource="EMBL" id="BX831498"/>
    </conflict>
    <text>Sequencing errors.</text>
</comment>
<accession>Q9LV16</accession>
<accession>W8Q690</accession>
<evidence type="ECO:0000255" key="1"/>
<evidence type="ECO:0000255" key="2">
    <source>
        <dbReference type="PROSITE-ProRule" id="PRU00639"/>
    </source>
</evidence>
<evidence type="ECO:0000256" key="3">
    <source>
        <dbReference type="SAM" id="MobiDB-lite"/>
    </source>
</evidence>
<evidence type="ECO:0000269" key="4">
    <source>
    </source>
</evidence>
<evidence type="ECO:0000269" key="5">
    <source>
    </source>
</evidence>
<evidence type="ECO:0000303" key="6">
    <source>
    </source>
</evidence>
<evidence type="ECO:0000305" key="7"/>
<evidence type="ECO:0000305" key="8">
    <source>
    </source>
</evidence>